<proteinExistence type="inferred from homology"/>
<comment type="function">
    <text evidence="1">F(1)F(0) ATP synthase produces ATP from ADP in the presence of a proton or sodium gradient. F-type ATPases consist of two structural domains, F(1) containing the extramembraneous catalytic core and F(0) containing the membrane proton channel, linked together by a central stalk and a peripheral stalk. During catalysis, ATP synthesis in the catalytic domain of F(1) is coupled via a rotary mechanism of the central stalk subunits to proton translocation.</text>
</comment>
<comment type="function">
    <text evidence="1">This protein is part of the stalk that links CF(0) to CF(1). It either transmits conformational changes from CF(0) to CF(1) or is implicated in proton conduction.</text>
</comment>
<comment type="subunit">
    <text evidence="1">F-type ATPases have 2 components, F(1) - the catalytic core - and F(0) - the membrane proton channel. F(1) has five subunits: alpha(3), beta(3), gamma(1), delta(1), epsilon(1). F(0) has three main subunits: a(1), b(2) and c(10-14). The alpha and beta chains form an alternating ring which encloses part of the gamma chain. F(1) is attached to F(0) by a central stalk formed by the gamma and epsilon chains, while a peripheral stalk is formed by the delta and b chains.</text>
</comment>
<comment type="subcellular location">
    <subcellularLocation>
        <location evidence="1">Cell inner membrane</location>
        <topology evidence="1">Peripheral membrane protein</topology>
    </subcellularLocation>
</comment>
<comment type="similarity">
    <text evidence="1">Belongs to the ATPase delta chain family.</text>
</comment>
<dbReference type="EMBL" id="CP000699">
    <property type="protein sequence ID" value="ABQ66988.1"/>
    <property type="molecule type" value="Genomic_DNA"/>
</dbReference>
<dbReference type="SMR" id="A5V3X2"/>
<dbReference type="STRING" id="392499.Swit_0620"/>
<dbReference type="PaxDb" id="392499-Swit_0620"/>
<dbReference type="KEGG" id="swi:Swit_0620"/>
<dbReference type="eggNOG" id="COG0712">
    <property type="taxonomic scope" value="Bacteria"/>
</dbReference>
<dbReference type="HOGENOM" id="CLU_085114_0_1_5"/>
<dbReference type="OrthoDB" id="9796185at2"/>
<dbReference type="Proteomes" id="UP000001989">
    <property type="component" value="Chromosome"/>
</dbReference>
<dbReference type="GO" id="GO:0005886">
    <property type="term" value="C:plasma membrane"/>
    <property type="evidence" value="ECO:0007669"/>
    <property type="project" value="UniProtKB-SubCell"/>
</dbReference>
<dbReference type="GO" id="GO:0045259">
    <property type="term" value="C:proton-transporting ATP synthase complex"/>
    <property type="evidence" value="ECO:0007669"/>
    <property type="project" value="UniProtKB-KW"/>
</dbReference>
<dbReference type="GO" id="GO:0046933">
    <property type="term" value="F:proton-transporting ATP synthase activity, rotational mechanism"/>
    <property type="evidence" value="ECO:0007669"/>
    <property type="project" value="UniProtKB-UniRule"/>
</dbReference>
<dbReference type="Gene3D" id="1.10.520.20">
    <property type="entry name" value="N-terminal domain of the delta subunit of the F1F0-ATP synthase"/>
    <property type="match status" value="1"/>
</dbReference>
<dbReference type="HAMAP" id="MF_01416">
    <property type="entry name" value="ATP_synth_delta_bact"/>
    <property type="match status" value="1"/>
</dbReference>
<dbReference type="InterPro" id="IPR026015">
    <property type="entry name" value="ATP_synth_OSCP/delta_N_sf"/>
</dbReference>
<dbReference type="InterPro" id="IPR020781">
    <property type="entry name" value="ATPase_OSCP/d_CS"/>
</dbReference>
<dbReference type="InterPro" id="IPR000711">
    <property type="entry name" value="ATPase_OSCP/dsu"/>
</dbReference>
<dbReference type="NCBIfam" id="TIGR01145">
    <property type="entry name" value="ATP_synt_delta"/>
    <property type="match status" value="1"/>
</dbReference>
<dbReference type="NCBIfam" id="NF004402">
    <property type="entry name" value="PRK05758.2-2"/>
    <property type="match status" value="1"/>
</dbReference>
<dbReference type="NCBIfam" id="NF004406">
    <property type="entry name" value="PRK05758.3-2"/>
    <property type="match status" value="1"/>
</dbReference>
<dbReference type="PANTHER" id="PTHR11910">
    <property type="entry name" value="ATP SYNTHASE DELTA CHAIN"/>
    <property type="match status" value="1"/>
</dbReference>
<dbReference type="Pfam" id="PF00213">
    <property type="entry name" value="OSCP"/>
    <property type="match status" value="1"/>
</dbReference>
<dbReference type="PRINTS" id="PR00125">
    <property type="entry name" value="ATPASEDELTA"/>
</dbReference>
<dbReference type="SUPFAM" id="SSF47928">
    <property type="entry name" value="N-terminal domain of the delta subunit of the F1F0-ATP synthase"/>
    <property type="match status" value="1"/>
</dbReference>
<dbReference type="PROSITE" id="PS00389">
    <property type="entry name" value="ATPASE_DELTA"/>
    <property type="match status" value="1"/>
</dbReference>
<keyword id="KW-0066">ATP synthesis</keyword>
<keyword id="KW-0997">Cell inner membrane</keyword>
<keyword id="KW-1003">Cell membrane</keyword>
<keyword id="KW-0139">CF(1)</keyword>
<keyword id="KW-0375">Hydrogen ion transport</keyword>
<keyword id="KW-0406">Ion transport</keyword>
<keyword id="KW-0472">Membrane</keyword>
<keyword id="KW-1185">Reference proteome</keyword>
<keyword id="KW-0813">Transport</keyword>
<gene>
    <name evidence="1" type="primary">atpH</name>
    <name type="ordered locus">Swit_0620</name>
</gene>
<feature type="chain" id="PRO_1000184795" description="ATP synthase subunit delta">
    <location>
        <begin position="1"/>
        <end position="184"/>
    </location>
</feature>
<reference key="1">
    <citation type="journal article" date="2010" name="J. Bacteriol.">
        <title>Genome sequence of the dioxin-mineralizing bacterium Sphingomonas wittichii RW1.</title>
        <authorList>
            <person name="Miller T.R."/>
            <person name="Delcher A.L."/>
            <person name="Salzberg S.L."/>
            <person name="Saunders E."/>
            <person name="Detter J.C."/>
            <person name="Halden R.U."/>
        </authorList>
    </citation>
    <scope>NUCLEOTIDE SEQUENCE [LARGE SCALE GENOMIC DNA]</scope>
    <source>
        <strain>DSM 6014 / CCUG 31198 / JCM 15750 / NBRC 105917 / EY 4224 / RW1</strain>
    </source>
</reference>
<protein>
    <recommendedName>
        <fullName evidence="1">ATP synthase subunit delta</fullName>
    </recommendedName>
    <alternativeName>
        <fullName evidence="1">ATP synthase F(1) sector subunit delta</fullName>
    </alternativeName>
    <alternativeName>
        <fullName evidence="1">F-type ATPase subunit delta</fullName>
        <shortName evidence="1">F-ATPase subunit delta</shortName>
    </alternativeName>
</protein>
<organism>
    <name type="scientific">Rhizorhabdus wittichii (strain DSM 6014 / CCUG 31198 / JCM 15750 / NBRC 105917 / EY 4224 / RW1)</name>
    <name type="common">Sphingomonas wittichii</name>
    <dbReference type="NCBI Taxonomy" id="392499"/>
    <lineage>
        <taxon>Bacteria</taxon>
        <taxon>Pseudomonadati</taxon>
        <taxon>Pseudomonadota</taxon>
        <taxon>Alphaproteobacteria</taxon>
        <taxon>Sphingomonadales</taxon>
        <taxon>Sphingomonadaceae</taxon>
        <taxon>Rhizorhabdus</taxon>
    </lineage>
</organism>
<accession>A5V3X2</accession>
<evidence type="ECO:0000255" key="1">
    <source>
        <dbReference type="HAMAP-Rule" id="MF_01416"/>
    </source>
</evidence>
<sequence>MENSGGIQASLSGRYATALFGLARDEKAIDAVSASLQSLKAALTESDDFRRLTTSPLVSRDEAMKAVAATAASLGIDPLTTKFLGVLAQNRRLGQLGAVIRSFGTLSARHRGETTAEVTSAHPLTATQVKALKAKLKTQLDRDVAVDLTVDPSILGGLIVKIGSRQIDGSIRSKLNSLAIAMKG</sequence>
<name>ATPD_RHIWR</name>